<dbReference type="EMBL" id="AP010918">
    <property type="protein sequence ID" value="BAH27781.1"/>
    <property type="molecule type" value="Genomic_DNA"/>
</dbReference>
<dbReference type="RefSeq" id="WP_003418312.1">
    <property type="nucleotide sequence ID" value="NZ_CP014566.1"/>
</dbReference>
<dbReference type="SMR" id="C1AHQ2"/>
<dbReference type="GeneID" id="45427433"/>
<dbReference type="KEGG" id="mbt:JTY_3509"/>
<dbReference type="HOGENOM" id="CLU_082184_2_2_11"/>
<dbReference type="GO" id="GO:0022625">
    <property type="term" value="C:cytosolic large ribosomal subunit"/>
    <property type="evidence" value="ECO:0007669"/>
    <property type="project" value="TreeGrafter"/>
</dbReference>
<dbReference type="GO" id="GO:0003729">
    <property type="term" value="F:mRNA binding"/>
    <property type="evidence" value="ECO:0007669"/>
    <property type="project" value="TreeGrafter"/>
</dbReference>
<dbReference type="GO" id="GO:0003735">
    <property type="term" value="F:structural constituent of ribosome"/>
    <property type="evidence" value="ECO:0007669"/>
    <property type="project" value="InterPro"/>
</dbReference>
<dbReference type="GO" id="GO:0017148">
    <property type="term" value="P:negative regulation of translation"/>
    <property type="evidence" value="ECO:0007669"/>
    <property type="project" value="TreeGrafter"/>
</dbReference>
<dbReference type="GO" id="GO:0006412">
    <property type="term" value="P:translation"/>
    <property type="evidence" value="ECO:0007669"/>
    <property type="project" value="UniProtKB-UniRule"/>
</dbReference>
<dbReference type="CDD" id="cd00392">
    <property type="entry name" value="Ribosomal_L13"/>
    <property type="match status" value="1"/>
</dbReference>
<dbReference type="FunFam" id="3.90.1180.10:FF:000001">
    <property type="entry name" value="50S ribosomal protein L13"/>
    <property type="match status" value="1"/>
</dbReference>
<dbReference type="Gene3D" id="3.90.1180.10">
    <property type="entry name" value="Ribosomal protein L13"/>
    <property type="match status" value="1"/>
</dbReference>
<dbReference type="HAMAP" id="MF_01366">
    <property type="entry name" value="Ribosomal_uL13"/>
    <property type="match status" value="1"/>
</dbReference>
<dbReference type="InterPro" id="IPR005822">
    <property type="entry name" value="Ribosomal_uL13"/>
</dbReference>
<dbReference type="InterPro" id="IPR005823">
    <property type="entry name" value="Ribosomal_uL13_bac-type"/>
</dbReference>
<dbReference type="InterPro" id="IPR023563">
    <property type="entry name" value="Ribosomal_uL13_CS"/>
</dbReference>
<dbReference type="InterPro" id="IPR036899">
    <property type="entry name" value="Ribosomal_uL13_sf"/>
</dbReference>
<dbReference type="NCBIfam" id="TIGR01066">
    <property type="entry name" value="rplM_bact"/>
    <property type="match status" value="1"/>
</dbReference>
<dbReference type="PANTHER" id="PTHR11545:SF2">
    <property type="entry name" value="LARGE RIBOSOMAL SUBUNIT PROTEIN UL13M"/>
    <property type="match status" value="1"/>
</dbReference>
<dbReference type="PANTHER" id="PTHR11545">
    <property type="entry name" value="RIBOSOMAL PROTEIN L13"/>
    <property type="match status" value="1"/>
</dbReference>
<dbReference type="Pfam" id="PF00572">
    <property type="entry name" value="Ribosomal_L13"/>
    <property type="match status" value="1"/>
</dbReference>
<dbReference type="PIRSF" id="PIRSF002181">
    <property type="entry name" value="Ribosomal_L13"/>
    <property type="match status" value="1"/>
</dbReference>
<dbReference type="SUPFAM" id="SSF52161">
    <property type="entry name" value="Ribosomal protein L13"/>
    <property type="match status" value="1"/>
</dbReference>
<dbReference type="PROSITE" id="PS00783">
    <property type="entry name" value="RIBOSOMAL_L13"/>
    <property type="match status" value="1"/>
</dbReference>
<reference key="1">
    <citation type="journal article" date="2009" name="Vaccine">
        <title>Whole genome sequence analysis of Mycobacterium bovis bacillus Calmette-Guerin (BCG) Tokyo 172: a comparative study of BCG vaccine substrains.</title>
        <authorList>
            <person name="Seki M."/>
            <person name="Honda I."/>
            <person name="Fujita I."/>
            <person name="Yano I."/>
            <person name="Yamamoto S."/>
            <person name="Koyama A."/>
        </authorList>
    </citation>
    <scope>NUCLEOTIDE SEQUENCE [LARGE SCALE GENOMIC DNA]</scope>
    <source>
        <strain>BCG / Tokyo 172 / ATCC 35737 / TMC 1019</strain>
    </source>
</reference>
<organism>
    <name type="scientific">Mycobacterium bovis (strain BCG / Tokyo 172 / ATCC 35737 / TMC 1019)</name>
    <dbReference type="NCBI Taxonomy" id="561275"/>
    <lineage>
        <taxon>Bacteria</taxon>
        <taxon>Bacillati</taxon>
        <taxon>Actinomycetota</taxon>
        <taxon>Actinomycetes</taxon>
        <taxon>Mycobacteriales</taxon>
        <taxon>Mycobacteriaceae</taxon>
        <taxon>Mycobacterium</taxon>
        <taxon>Mycobacterium tuberculosis complex</taxon>
    </lineage>
</organism>
<accession>C1AHQ2</accession>
<evidence type="ECO:0000255" key="1">
    <source>
        <dbReference type="HAMAP-Rule" id="MF_01366"/>
    </source>
</evidence>
<evidence type="ECO:0000256" key="2">
    <source>
        <dbReference type="SAM" id="MobiDB-lite"/>
    </source>
</evidence>
<evidence type="ECO:0000305" key="3"/>
<proteinExistence type="inferred from homology"/>
<gene>
    <name evidence="1" type="primary">rplM</name>
    <name type="ordered locus">JTY_3509</name>
</gene>
<keyword id="KW-0687">Ribonucleoprotein</keyword>
<keyword id="KW-0689">Ribosomal protein</keyword>
<name>RL13_MYCBT</name>
<feature type="chain" id="PRO_1000166876" description="Large ribosomal subunit protein uL13">
    <location>
        <begin position="1"/>
        <end position="147"/>
    </location>
</feature>
<feature type="region of interest" description="Disordered" evidence="2">
    <location>
        <begin position="128"/>
        <end position="147"/>
    </location>
</feature>
<sequence>MPTYAPKAGDTTRSWYVIDATDVVLGRLAVAAANLLRGKHKPTFAPNVDGGDFVIVINADKVAISGDKLQHKMVYRHSGYPGGLHKRTIGELMQRHPDRVVEKAILGMLPKNRLSRQIQRKLRVYAGPEHPHSAQQPVPYELKQVAQ</sequence>
<protein>
    <recommendedName>
        <fullName evidence="1">Large ribosomal subunit protein uL13</fullName>
    </recommendedName>
    <alternativeName>
        <fullName evidence="3">50S ribosomal protein L13</fullName>
    </alternativeName>
</protein>
<comment type="function">
    <text evidence="1">This protein is one of the early assembly proteins of the 50S ribosomal subunit, although it is not seen to bind rRNA by itself. It is important during the early stages of 50S assembly.</text>
</comment>
<comment type="subunit">
    <text evidence="1">Part of the 50S ribosomal subunit.</text>
</comment>
<comment type="similarity">
    <text evidence="1">Belongs to the universal ribosomal protein uL13 family.</text>
</comment>